<gene>
    <name type="ordered locus">PA14_51810</name>
</gene>
<organism>
    <name type="scientific">Pseudomonas aeruginosa (strain UCBPP-PA14)</name>
    <dbReference type="NCBI Taxonomy" id="208963"/>
    <lineage>
        <taxon>Bacteria</taxon>
        <taxon>Pseudomonadati</taxon>
        <taxon>Pseudomonadota</taxon>
        <taxon>Gammaproteobacteria</taxon>
        <taxon>Pseudomonadales</taxon>
        <taxon>Pseudomonadaceae</taxon>
        <taxon>Pseudomonas</taxon>
    </lineage>
</organism>
<comment type="subcellular location">
    <subcellularLocation>
        <location evidence="1">Cytoplasm</location>
    </subcellularLocation>
</comment>
<comment type="similarity">
    <text evidence="1">Belongs to the TACO1 family.</text>
</comment>
<accession>Q02IC6</accession>
<reference key="1">
    <citation type="journal article" date="2006" name="Genome Biol.">
        <title>Genomic analysis reveals that Pseudomonas aeruginosa virulence is combinatorial.</title>
        <authorList>
            <person name="Lee D.G."/>
            <person name="Urbach J.M."/>
            <person name="Wu G."/>
            <person name="Liberati N.T."/>
            <person name="Feinbaum R.L."/>
            <person name="Miyata S."/>
            <person name="Diggins L.T."/>
            <person name="He J."/>
            <person name="Saucier M."/>
            <person name="Deziel E."/>
            <person name="Friedman L."/>
            <person name="Li L."/>
            <person name="Grills G."/>
            <person name="Montgomery K."/>
            <person name="Kucherlapati R."/>
            <person name="Rahme L.G."/>
            <person name="Ausubel F.M."/>
        </authorList>
    </citation>
    <scope>NUCLEOTIDE SEQUENCE [LARGE SCALE GENOMIC DNA]</scope>
    <source>
        <strain>UCBPP-PA14</strain>
    </source>
</reference>
<protein>
    <recommendedName>
        <fullName evidence="1">Probable transcriptional regulatory protein PA14_51810</fullName>
    </recommendedName>
</protein>
<evidence type="ECO:0000255" key="1">
    <source>
        <dbReference type="HAMAP-Rule" id="MF_00693"/>
    </source>
</evidence>
<keyword id="KW-0963">Cytoplasm</keyword>
<keyword id="KW-0238">DNA-binding</keyword>
<keyword id="KW-0804">Transcription</keyword>
<keyword id="KW-0805">Transcription regulation</keyword>
<feature type="chain" id="PRO_1000045358" description="Probable transcriptional regulatory protein PA14_51810">
    <location>
        <begin position="1"/>
        <end position="248"/>
    </location>
</feature>
<sequence length="248" mass="26557">MAGHSKWANIKHRKERQDAKKGKIFTKLIRELTVAARQGGGVPADNPRLRLAVDKALTANMTRDTIDRAIARGVGSNDADNMVELSYEGYAPSGVAIIVEAMTDNRNRTAAEVRHAFSKCGGNLGTDGSVAYMFERKGQISFAPGVDEEALMDAALEAGADDVVVNDDGSIDVFTTFADFISVNEALAAAGFKGDEAEVTMIPSTTATLDLETAQKVLKLIDMLEDLDDVQNVYSNADIPDDVMAQLG</sequence>
<proteinExistence type="inferred from homology"/>
<name>Y5181_PSEAB</name>
<dbReference type="EMBL" id="CP000438">
    <property type="protein sequence ID" value="ABJ10125.1"/>
    <property type="molecule type" value="Genomic_DNA"/>
</dbReference>
<dbReference type="RefSeq" id="WP_003086107.1">
    <property type="nucleotide sequence ID" value="NZ_CP034244.1"/>
</dbReference>
<dbReference type="SMR" id="Q02IC6"/>
<dbReference type="KEGG" id="pau:PA14_51810"/>
<dbReference type="PseudoCAP" id="PA14_51810"/>
<dbReference type="HOGENOM" id="CLU_062974_2_2_6"/>
<dbReference type="BioCyc" id="PAER208963:G1G74-4358-MONOMER"/>
<dbReference type="Proteomes" id="UP000000653">
    <property type="component" value="Chromosome"/>
</dbReference>
<dbReference type="GO" id="GO:0005829">
    <property type="term" value="C:cytosol"/>
    <property type="evidence" value="ECO:0007669"/>
    <property type="project" value="TreeGrafter"/>
</dbReference>
<dbReference type="GO" id="GO:0003677">
    <property type="term" value="F:DNA binding"/>
    <property type="evidence" value="ECO:0007669"/>
    <property type="project" value="UniProtKB-UniRule"/>
</dbReference>
<dbReference type="GO" id="GO:0006355">
    <property type="term" value="P:regulation of DNA-templated transcription"/>
    <property type="evidence" value="ECO:0007669"/>
    <property type="project" value="UniProtKB-UniRule"/>
</dbReference>
<dbReference type="FunFam" id="1.10.10.200:FF:000001">
    <property type="entry name" value="Probable transcriptional regulatory protein YebC"/>
    <property type="match status" value="1"/>
</dbReference>
<dbReference type="FunFam" id="3.30.70.980:FF:000002">
    <property type="entry name" value="Probable transcriptional regulatory protein YebC"/>
    <property type="match status" value="1"/>
</dbReference>
<dbReference type="Gene3D" id="1.10.10.200">
    <property type="match status" value="1"/>
</dbReference>
<dbReference type="Gene3D" id="3.30.70.980">
    <property type="match status" value="2"/>
</dbReference>
<dbReference type="HAMAP" id="MF_00693">
    <property type="entry name" value="Transcrip_reg_TACO1"/>
    <property type="match status" value="1"/>
</dbReference>
<dbReference type="InterPro" id="IPR017856">
    <property type="entry name" value="Integrase-like_N"/>
</dbReference>
<dbReference type="InterPro" id="IPR048300">
    <property type="entry name" value="TACO1_YebC-like_2nd/3rd_dom"/>
</dbReference>
<dbReference type="InterPro" id="IPR049083">
    <property type="entry name" value="TACO1_YebC_N"/>
</dbReference>
<dbReference type="InterPro" id="IPR002876">
    <property type="entry name" value="Transcrip_reg_TACO1-like"/>
</dbReference>
<dbReference type="InterPro" id="IPR026564">
    <property type="entry name" value="Transcrip_reg_TACO1-like_dom3"/>
</dbReference>
<dbReference type="InterPro" id="IPR029072">
    <property type="entry name" value="YebC-like"/>
</dbReference>
<dbReference type="NCBIfam" id="NF001030">
    <property type="entry name" value="PRK00110.1"/>
    <property type="match status" value="1"/>
</dbReference>
<dbReference type="NCBIfam" id="NF009044">
    <property type="entry name" value="PRK12378.1"/>
    <property type="match status" value="1"/>
</dbReference>
<dbReference type="NCBIfam" id="TIGR01033">
    <property type="entry name" value="YebC/PmpR family DNA-binding transcriptional regulator"/>
    <property type="match status" value="1"/>
</dbReference>
<dbReference type="PANTHER" id="PTHR12532:SF6">
    <property type="entry name" value="TRANSCRIPTIONAL REGULATORY PROTEIN YEBC-RELATED"/>
    <property type="match status" value="1"/>
</dbReference>
<dbReference type="PANTHER" id="PTHR12532">
    <property type="entry name" value="TRANSLATIONAL ACTIVATOR OF CYTOCHROME C OXIDASE 1"/>
    <property type="match status" value="1"/>
</dbReference>
<dbReference type="Pfam" id="PF20772">
    <property type="entry name" value="TACO1_YebC_N"/>
    <property type="match status" value="1"/>
</dbReference>
<dbReference type="Pfam" id="PF01709">
    <property type="entry name" value="Transcrip_reg"/>
    <property type="match status" value="1"/>
</dbReference>
<dbReference type="SUPFAM" id="SSF75625">
    <property type="entry name" value="YebC-like"/>
    <property type="match status" value="1"/>
</dbReference>